<feature type="chain" id="PRO_1000055621" description="Large ribosomal subunit protein uL14">
    <location>
        <begin position="1"/>
        <end position="122"/>
    </location>
</feature>
<accession>Q71WF6</accession>
<protein>
    <recommendedName>
        <fullName evidence="1">Large ribosomal subunit protein uL14</fullName>
    </recommendedName>
    <alternativeName>
        <fullName evidence="2">50S ribosomal protein L14</fullName>
    </alternativeName>
</protein>
<reference key="1">
    <citation type="journal article" date="2004" name="Nucleic Acids Res.">
        <title>Whole genome comparisons of serotype 4b and 1/2a strains of the food-borne pathogen Listeria monocytogenes reveal new insights into the core genome components of this species.</title>
        <authorList>
            <person name="Nelson K.E."/>
            <person name="Fouts D.E."/>
            <person name="Mongodin E.F."/>
            <person name="Ravel J."/>
            <person name="DeBoy R.T."/>
            <person name="Kolonay J.F."/>
            <person name="Rasko D.A."/>
            <person name="Angiuoli S.V."/>
            <person name="Gill S.R."/>
            <person name="Paulsen I.T."/>
            <person name="Peterson J.D."/>
            <person name="White O."/>
            <person name="Nelson W.C."/>
            <person name="Nierman W.C."/>
            <person name="Beanan M.J."/>
            <person name="Brinkac L.M."/>
            <person name="Daugherty S.C."/>
            <person name="Dodson R.J."/>
            <person name="Durkin A.S."/>
            <person name="Madupu R."/>
            <person name="Haft D.H."/>
            <person name="Selengut J."/>
            <person name="Van Aken S.E."/>
            <person name="Khouri H.M."/>
            <person name="Fedorova N."/>
            <person name="Forberger H.A."/>
            <person name="Tran B."/>
            <person name="Kathariou S."/>
            <person name="Wonderling L.D."/>
            <person name="Uhlich G.A."/>
            <person name="Bayles D.O."/>
            <person name="Luchansky J.B."/>
            <person name="Fraser C.M."/>
        </authorList>
    </citation>
    <scope>NUCLEOTIDE SEQUENCE [LARGE SCALE GENOMIC DNA]</scope>
    <source>
        <strain>F2365</strain>
    </source>
</reference>
<comment type="function">
    <text evidence="1">Binds to 23S rRNA. Forms part of two intersubunit bridges in the 70S ribosome.</text>
</comment>
<comment type="subunit">
    <text evidence="1">Part of the 50S ribosomal subunit. Forms a cluster with proteins L3 and L19. In the 70S ribosome, L14 and L19 interact and together make contacts with the 16S rRNA in bridges B5 and B8.</text>
</comment>
<comment type="similarity">
    <text evidence="1">Belongs to the universal ribosomal protein uL14 family.</text>
</comment>
<keyword id="KW-0687">Ribonucleoprotein</keyword>
<keyword id="KW-0689">Ribosomal protein</keyword>
<keyword id="KW-0694">RNA-binding</keyword>
<keyword id="KW-0699">rRNA-binding</keyword>
<name>RL14_LISMF</name>
<gene>
    <name evidence="1" type="primary">rplN</name>
    <name type="ordered locus">LMOf2365_2595</name>
</gene>
<proteinExistence type="inferred from homology"/>
<organism>
    <name type="scientific">Listeria monocytogenes serotype 4b (strain F2365)</name>
    <dbReference type="NCBI Taxonomy" id="265669"/>
    <lineage>
        <taxon>Bacteria</taxon>
        <taxon>Bacillati</taxon>
        <taxon>Bacillota</taxon>
        <taxon>Bacilli</taxon>
        <taxon>Bacillales</taxon>
        <taxon>Listeriaceae</taxon>
        <taxon>Listeria</taxon>
    </lineage>
</organism>
<dbReference type="EMBL" id="AE017262">
    <property type="protein sequence ID" value="AAT05360.1"/>
    <property type="molecule type" value="Genomic_DNA"/>
</dbReference>
<dbReference type="RefSeq" id="WP_003723686.1">
    <property type="nucleotide sequence ID" value="NC_002973.6"/>
</dbReference>
<dbReference type="SMR" id="Q71WF6"/>
<dbReference type="GeneID" id="93240503"/>
<dbReference type="KEGG" id="lmf:LMOf2365_2595"/>
<dbReference type="HOGENOM" id="CLU_095071_2_1_9"/>
<dbReference type="GO" id="GO:0022625">
    <property type="term" value="C:cytosolic large ribosomal subunit"/>
    <property type="evidence" value="ECO:0007669"/>
    <property type="project" value="TreeGrafter"/>
</dbReference>
<dbReference type="GO" id="GO:0070180">
    <property type="term" value="F:large ribosomal subunit rRNA binding"/>
    <property type="evidence" value="ECO:0007669"/>
    <property type="project" value="TreeGrafter"/>
</dbReference>
<dbReference type="GO" id="GO:0003735">
    <property type="term" value="F:structural constituent of ribosome"/>
    <property type="evidence" value="ECO:0007669"/>
    <property type="project" value="InterPro"/>
</dbReference>
<dbReference type="GO" id="GO:0006412">
    <property type="term" value="P:translation"/>
    <property type="evidence" value="ECO:0007669"/>
    <property type="project" value="UniProtKB-UniRule"/>
</dbReference>
<dbReference type="CDD" id="cd00337">
    <property type="entry name" value="Ribosomal_uL14"/>
    <property type="match status" value="1"/>
</dbReference>
<dbReference type="FunFam" id="2.40.150.20:FF:000001">
    <property type="entry name" value="50S ribosomal protein L14"/>
    <property type="match status" value="1"/>
</dbReference>
<dbReference type="Gene3D" id="2.40.150.20">
    <property type="entry name" value="Ribosomal protein L14"/>
    <property type="match status" value="1"/>
</dbReference>
<dbReference type="HAMAP" id="MF_01367">
    <property type="entry name" value="Ribosomal_uL14"/>
    <property type="match status" value="1"/>
</dbReference>
<dbReference type="InterPro" id="IPR000218">
    <property type="entry name" value="Ribosomal_uL14"/>
</dbReference>
<dbReference type="InterPro" id="IPR005745">
    <property type="entry name" value="Ribosomal_uL14_bac-type"/>
</dbReference>
<dbReference type="InterPro" id="IPR019972">
    <property type="entry name" value="Ribosomal_uL14_CS"/>
</dbReference>
<dbReference type="InterPro" id="IPR036853">
    <property type="entry name" value="Ribosomal_uL14_sf"/>
</dbReference>
<dbReference type="NCBIfam" id="TIGR01067">
    <property type="entry name" value="rplN_bact"/>
    <property type="match status" value="1"/>
</dbReference>
<dbReference type="PANTHER" id="PTHR11761">
    <property type="entry name" value="50S/60S RIBOSOMAL PROTEIN L14/L23"/>
    <property type="match status" value="1"/>
</dbReference>
<dbReference type="PANTHER" id="PTHR11761:SF3">
    <property type="entry name" value="LARGE RIBOSOMAL SUBUNIT PROTEIN UL14M"/>
    <property type="match status" value="1"/>
</dbReference>
<dbReference type="Pfam" id="PF00238">
    <property type="entry name" value="Ribosomal_L14"/>
    <property type="match status" value="1"/>
</dbReference>
<dbReference type="SMART" id="SM01374">
    <property type="entry name" value="Ribosomal_L14"/>
    <property type="match status" value="1"/>
</dbReference>
<dbReference type="SUPFAM" id="SSF50193">
    <property type="entry name" value="Ribosomal protein L14"/>
    <property type="match status" value="1"/>
</dbReference>
<dbReference type="PROSITE" id="PS00049">
    <property type="entry name" value="RIBOSOMAL_L14"/>
    <property type="match status" value="1"/>
</dbReference>
<sequence>MIQQESRMKVADNSGAREVLTIKVLGGSGRKTANIGDVVVCTVKQATPGGVVKKGEVVKAVIVRTKSGARRQDGSYIKFDENACVIIRDDKSPRGTRIFGPVARELRENNFMKIVSLAPEVL</sequence>
<evidence type="ECO:0000255" key="1">
    <source>
        <dbReference type="HAMAP-Rule" id="MF_01367"/>
    </source>
</evidence>
<evidence type="ECO:0000305" key="2"/>